<organism>
    <name type="scientific">Methanosarcina acetivorans (strain ATCC 35395 / DSM 2834 / JCM 12185 / C2A)</name>
    <dbReference type="NCBI Taxonomy" id="188937"/>
    <lineage>
        <taxon>Archaea</taxon>
        <taxon>Methanobacteriati</taxon>
        <taxon>Methanobacteriota</taxon>
        <taxon>Stenosarchaea group</taxon>
        <taxon>Methanomicrobia</taxon>
        <taxon>Methanosarcinales</taxon>
        <taxon>Methanosarcinaceae</taxon>
        <taxon>Methanosarcina</taxon>
    </lineage>
</organism>
<name>AKSA_METAC</name>
<protein>
    <recommendedName>
        <fullName>Homocitrate synthase AksA</fullName>
        <ecNumber evidence="1">2.3.3.14</ecNumber>
    </recommendedName>
    <alternativeName>
        <fullName>(R)-homo(2)citrate synthase</fullName>
        <ecNumber evidence="1">2.3.3.-</ecNumber>
    </alternativeName>
    <alternativeName>
        <fullName>(R)-homo(3)citrate synthase</fullName>
        <ecNumber evidence="1">2.3.3.-</ecNumber>
    </alternativeName>
</protein>
<proteinExistence type="inferred from homology"/>
<evidence type="ECO:0000250" key="1">
    <source>
        <dbReference type="UniProtKB" id="Q57926"/>
    </source>
</evidence>
<evidence type="ECO:0000255" key="2">
    <source>
        <dbReference type="PROSITE-ProRule" id="PRU01151"/>
    </source>
</evidence>
<evidence type="ECO:0000305" key="3"/>
<reference key="1">
    <citation type="journal article" date="2002" name="Genome Res.">
        <title>The genome of Methanosarcina acetivorans reveals extensive metabolic and physiological diversity.</title>
        <authorList>
            <person name="Galagan J.E."/>
            <person name="Nusbaum C."/>
            <person name="Roy A."/>
            <person name="Endrizzi M.G."/>
            <person name="Macdonald P."/>
            <person name="FitzHugh W."/>
            <person name="Calvo S."/>
            <person name="Engels R."/>
            <person name="Smirnov S."/>
            <person name="Atnoor D."/>
            <person name="Brown A."/>
            <person name="Allen N."/>
            <person name="Naylor J."/>
            <person name="Stange-Thomann N."/>
            <person name="DeArellano K."/>
            <person name="Johnson R."/>
            <person name="Linton L."/>
            <person name="McEwan P."/>
            <person name="McKernan K."/>
            <person name="Talamas J."/>
            <person name="Tirrell A."/>
            <person name="Ye W."/>
            <person name="Zimmer A."/>
            <person name="Barber R.D."/>
            <person name="Cann I."/>
            <person name="Graham D.E."/>
            <person name="Grahame D.A."/>
            <person name="Guss A.M."/>
            <person name="Hedderich R."/>
            <person name="Ingram-Smith C."/>
            <person name="Kuettner H.C."/>
            <person name="Krzycki J.A."/>
            <person name="Leigh J.A."/>
            <person name="Li W."/>
            <person name="Liu J."/>
            <person name="Mukhopadhyay B."/>
            <person name="Reeve J.N."/>
            <person name="Smith K."/>
            <person name="Springer T.A."/>
            <person name="Umayam L.A."/>
            <person name="White O."/>
            <person name="White R.H."/>
            <person name="de Macario E.C."/>
            <person name="Ferry J.G."/>
            <person name="Jarrell K.F."/>
            <person name="Jing H."/>
            <person name="Macario A.J.L."/>
            <person name="Paulsen I.T."/>
            <person name="Pritchett M."/>
            <person name="Sowers K.R."/>
            <person name="Swanson R.V."/>
            <person name="Zinder S.H."/>
            <person name="Lander E."/>
            <person name="Metcalf W.W."/>
            <person name="Birren B."/>
        </authorList>
    </citation>
    <scope>NUCLEOTIDE SEQUENCE [LARGE SCALE GENOMIC DNA]</scope>
    <source>
        <strain>ATCC 35395 / DSM 2834 / JCM 12185 / C2A</strain>
    </source>
</reference>
<comment type="function">
    <text evidence="1">Catalyzes the condensation of alpha-ketoglutarate and acetyl-CoA to form (R)-homocitrate. Can also catalyze the condensation of alpha-ketoadipate with acetyl-CoA to form (R)-homo(2)citrate, and the condensation of alpha-ketopimelate with acetyl-CoA to form (R)-homo(3)citrate. These reactions are part of the biosynthesis pathway of coenzyme B and biotin.</text>
</comment>
<comment type="catalytic activity">
    <reaction evidence="1">
        <text>acetyl-CoA + 2-oxoglutarate + H2O = (2R)-homocitrate + CoA + H(+)</text>
        <dbReference type="Rhea" id="RHEA:12929"/>
        <dbReference type="ChEBI" id="CHEBI:15377"/>
        <dbReference type="ChEBI" id="CHEBI:15378"/>
        <dbReference type="ChEBI" id="CHEBI:16810"/>
        <dbReference type="ChEBI" id="CHEBI:57287"/>
        <dbReference type="ChEBI" id="CHEBI:57288"/>
        <dbReference type="ChEBI" id="CHEBI:58884"/>
        <dbReference type="EC" id="2.3.3.14"/>
    </reaction>
    <physiologicalReaction direction="left-to-right" evidence="1">
        <dbReference type="Rhea" id="RHEA:12930"/>
    </physiologicalReaction>
</comment>
<comment type="catalytic activity">
    <reaction evidence="1">
        <text>2-oxoadipate + acetyl-CoA + H2O = (R)-dihomocitrate + CoA + H(+)</text>
        <dbReference type="Rhea" id="RHEA:44924"/>
        <dbReference type="ChEBI" id="CHEBI:15377"/>
        <dbReference type="ChEBI" id="CHEBI:15378"/>
        <dbReference type="ChEBI" id="CHEBI:57287"/>
        <dbReference type="ChEBI" id="CHEBI:57288"/>
        <dbReference type="ChEBI" id="CHEBI:57499"/>
        <dbReference type="ChEBI" id="CHEBI:72697"/>
    </reaction>
    <physiologicalReaction direction="left-to-right" evidence="1">
        <dbReference type="Rhea" id="RHEA:44925"/>
    </physiologicalReaction>
</comment>
<comment type="catalytic activity">
    <reaction evidence="1">
        <text>2-oxoheptanedioate + acetyl-CoA + H2O = (R)-trihomocitrate + CoA + H(+)</text>
        <dbReference type="Rhea" id="RHEA:44928"/>
        <dbReference type="ChEBI" id="CHEBI:15377"/>
        <dbReference type="ChEBI" id="CHEBI:15378"/>
        <dbReference type="ChEBI" id="CHEBI:57287"/>
        <dbReference type="ChEBI" id="CHEBI:57288"/>
        <dbReference type="ChEBI" id="CHEBI:72699"/>
        <dbReference type="ChEBI" id="CHEBI:72701"/>
    </reaction>
    <physiologicalReaction direction="left-to-right" evidence="1">
        <dbReference type="Rhea" id="RHEA:44929"/>
    </physiologicalReaction>
</comment>
<comment type="pathway">
    <text evidence="1">Organic acid metabolism; 2-oxosuberate biosynthesis.</text>
</comment>
<comment type="similarity">
    <text evidence="3">Belongs to the alpha-IPM synthase/homocitrate synthase family.</text>
</comment>
<keyword id="KW-1185">Reference proteome</keyword>
<keyword id="KW-0808">Transferase</keyword>
<sequence>MSESEQYSRNTLMDFIEYRPLDIEICDVTLRDGEQTPGVVFTKEQKLAVASELDSMGIEVIEAGFPVVSAYEKEIVKEIANQGYDSRICCLSRAVKGDVDAALDCDVDIVSIFIAMSDMHLKYKYHRTLEDMLGCAKEAIEYATDHGLNVRFAAEDASRTPIDRLKQAFKEVENEYKVQYVSLADTIGILNPTTTHYLVSEIFKCVNTSICIHCHDDLGMATANTLAAAEAGAKQLHTTVNGIGERAGNASLEEMLVALRVQYGIERYDTTKLTALSRMISEYSNITPSVNKAVVGQNAFTHESGIHVAAILEEPRTYELFLPEMVGGKRNLVVGKHTGTKALKGIINSIGFCLEREELCALIEKVKVCTDEKRRSISREQLEKLIAQVRQEQKPSASEKEKFSI</sequence>
<gene>
    <name type="primary">aksA</name>
    <name type="ordered locus">MA_3342</name>
</gene>
<feature type="chain" id="PRO_0000140408" description="Homocitrate synthase AksA">
    <location>
        <begin position="1"/>
        <end position="405"/>
    </location>
</feature>
<feature type="domain" description="Pyruvate carboxyltransferase" evidence="2">
    <location>
        <begin position="23"/>
        <end position="274"/>
    </location>
</feature>
<dbReference type="EC" id="2.3.3.14" evidence="1"/>
<dbReference type="EC" id="2.3.3.-" evidence="1"/>
<dbReference type="EMBL" id="AE010299">
    <property type="protein sequence ID" value="AAM06711.1"/>
    <property type="molecule type" value="Genomic_DNA"/>
</dbReference>
<dbReference type="RefSeq" id="WP_011023272.1">
    <property type="nucleotide sequence ID" value="NC_003552.1"/>
</dbReference>
<dbReference type="SMR" id="Q8TKQ6"/>
<dbReference type="STRING" id="188937.MA_3342"/>
<dbReference type="EnsemblBacteria" id="AAM06711">
    <property type="protein sequence ID" value="AAM06711"/>
    <property type="gene ID" value="MA_3342"/>
</dbReference>
<dbReference type="GeneID" id="1475235"/>
<dbReference type="KEGG" id="mac:MA_3342"/>
<dbReference type="HOGENOM" id="CLU_022158_4_2_2"/>
<dbReference type="InParanoid" id="Q8TKQ6"/>
<dbReference type="OrthoDB" id="6555at2157"/>
<dbReference type="PhylomeDB" id="Q8TKQ6"/>
<dbReference type="UniPathway" id="UPA00919"/>
<dbReference type="Proteomes" id="UP000002487">
    <property type="component" value="Chromosome"/>
</dbReference>
<dbReference type="GO" id="GO:0004410">
    <property type="term" value="F:homocitrate synthase activity"/>
    <property type="evidence" value="ECO:0007669"/>
    <property type="project" value="UniProtKB-EC"/>
</dbReference>
<dbReference type="GO" id="GO:0019298">
    <property type="term" value="P:coenzyme B biosynthetic process"/>
    <property type="evidence" value="ECO:0000318"/>
    <property type="project" value="GO_Central"/>
</dbReference>
<dbReference type="CDD" id="cd07940">
    <property type="entry name" value="DRE_TIM_IPMS"/>
    <property type="match status" value="1"/>
</dbReference>
<dbReference type="FunFam" id="3.20.20.70:FF:000010">
    <property type="entry name" value="2-isopropylmalate synthase"/>
    <property type="match status" value="1"/>
</dbReference>
<dbReference type="Gene3D" id="1.10.238.260">
    <property type="match status" value="1"/>
</dbReference>
<dbReference type="Gene3D" id="3.20.20.70">
    <property type="entry name" value="Aldolase class I"/>
    <property type="match status" value="1"/>
</dbReference>
<dbReference type="InterPro" id="IPR002034">
    <property type="entry name" value="AIPM/Hcit_synth_CS"/>
</dbReference>
<dbReference type="InterPro" id="IPR013785">
    <property type="entry name" value="Aldolase_TIM"/>
</dbReference>
<dbReference type="InterPro" id="IPR054691">
    <property type="entry name" value="LeuA/HCS_post-cat"/>
</dbReference>
<dbReference type="InterPro" id="IPR000891">
    <property type="entry name" value="PYR_CT"/>
</dbReference>
<dbReference type="PANTHER" id="PTHR42880">
    <property type="entry name" value="HOMOCITRATE SYNTHASE"/>
    <property type="match status" value="1"/>
</dbReference>
<dbReference type="PANTHER" id="PTHR42880:SF1">
    <property type="entry name" value="ISOPROPYLMALATE_HOMOCITRATE_CITRAMALATE SYNTHASE FAMILY PROTEIN"/>
    <property type="match status" value="1"/>
</dbReference>
<dbReference type="Pfam" id="PF22617">
    <property type="entry name" value="HCS_D2"/>
    <property type="match status" value="1"/>
</dbReference>
<dbReference type="Pfam" id="PF00682">
    <property type="entry name" value="HMGL-like"/>
    <property type="match status" value="1"/>
</dbReference>
<dbReference type="SUPFAM" id="SSF51569">
    <property type="entry name" value="Aldolase"/>
    <property type="match status" value="1"/>
</dbReference>
<dbReference type="PROSITE" id="PS00815">
    <property type="entry name" value="AIPM_HOMOCIT_SYNTH_1"/>
    <property type="match status" value="1"/>
</dbReference>
<dbReference type="PROSITE" id="PS00816">
    <property type="entry name" value="AIPM_HOMOCIT_SYNTH_2"/>
    <property type="match status" value="1"/>
</dbReference>
<dbReference type="PROSITE" id="PS50991">
    <property type="entry name" value="PYR_CT"/>
    <property type="match status" value="1"/>
</dbReference>
<accession>Q8TKQ6</accession>